<name>DAF19_CAEEL</name>
<keyword id="KW-0010">Activator</keyword>
<keyword id="KW-0025">Alternative splicing</keyword>
<keyword id="KW-0238">DNA-binding</keyword>
<keyword id="KW-0539">Nucleus</keyword>
<keyword id="KW-1185">Reference proteome</keyword>
<keyword id="KW-0804">Transcription</keyword>
<keyword id="KW-0805">Transcription regulation</keyword>
<accession>Q09555</accession>
<accession>C0P280</accession>
<accession>G5EBW8</accession>
<accession>Q9NHC9</accession>
<accession>S6EZR7</accession>
<protein>
    <recommendedName>
        <fullName>RFX-like transcription factor daf-19</fullName>
    </recommendedName>
    <alternativeName>
        <fullName evidence="11">Abnormal dauer formation protein 19</fullName>
    </alternativeName>
</protein>
<dbReference type="EMBL" id="AF226156">
    <property type="protein sequence ID" value="AAF61564.1"/>
    <property type="molecule type" value="mRNA"/>
</dbReference>
<dbReference type="EMBL" id="AF233652">
    <property type="protein sequence ID" value="AAF63475.1"/>
    <property type="molecule type" value="mRNA"/>
</dbReference>
<dbReference type="EMBL" id="EU812221">
    <property type="protein sequence ID" value="ACF17932.1"/>
    <property type="molecule type" value="mRNA"/>
</dbReference>
<dbReference type="EMBL" id="Z48783">
    <property type="protein sequence ID" value="CAA88701.1"/>
    <property type="molecule type" value="Genomic_DNA"/>
</dbReference>
<dbReference type="EMBL" id="Z48783">
    <property type="protein sequence ID" value="CAC42295.1"/>
    <property type="molecule type" value="Genomic_DNA"/>
</dbReference>
<dbReference type="EMBL" id="BX284602">
    <property type="protein sequence ID" value="CAR97827.1"/>
    <property type="molecule type" value="Genomic_DNA"/>
</dbReference>
<dbReference type="EMBL" id="BX284602">
    <property type="protein sequence ID" value="CAX51691.2"/>
    <property type="molecule type" value="Genomic_DNA"/>
</dbReference>
<dbReference type="EMBL" id="BX284602">
    <property type="protein sequence ID" value="CDG24134.1"/>
    <property type="molecule type" value="Genomic_DNA"/>
</dbReference>
<dbReference type="PIR" id="T21708">
    <property type="entry name" value="T21708"/>
</dbReference>
<dbReference type="RefSeq" id="NP_001022139.1">
    <molecule id="Q09555-2"/>
    <property type="nucleotide sequence ID" value="NM_001026968.5"/>
</dbReference>
<dbReference type="RefSeq" id="NP_001022140.1">
    <molecule id="Q09555-1"/>
    <property type="nucleotide sequence ID" value="NM_001026969.4"/>
</dbReference>
<dbReference type="RefSeq" id="NP_001254236.1">
    <molecule id="Q09555-4"/>
    <property type="nucleotide sequence ID" value="NM_001267307.5"/>
</dbReference>
<dbReference type="RefSeq" id="NP_001254237.1">
    <molecule id="Q09555-3"/>
    <property type="nucleotide sequence ID" value="NM_001267308.3"/>
</dbReference>
<dbReference type="RefSeq" id="NP_001293485.1">
    <molecule id="Q09555-5"/>
    <property type="nucleotide sequence ID" value="NM_001306556.3"/>
</dbReference>
<dbReference type="SMR" id="Q09555"/>
<dbReference type="BioGRID" id="39896">
    <property type="interactions" value="4"/>
</dbReference>
<dbReference type="FunCoup" id="Q09555">
    <property type="interactions" value="2986"/>
</dbReference>
<dbReference type="IntAct" id="Q09555">
    <property type="interactions" value="2"/>
</dbReference>
<dbReference type="STRING" id="6239.F33H1.1b.1"/>
<dbReference type="PaxDb" id="6239-F33H1.1b"/>
<dbReference type="EnsemblMetazoa" id="F33H1.1a.1">
    <molecule id="Q09555-2"/>
    <property type="protein sequence ID" value="F33H1.1a.1"/>
    <property type="gene ID" value="WBGene00000914"/>
</dbReference>
<dbReference type="EnsemblMetazoa" id="F33H1.1b.1">
    <molecule id="Q09555-1"/>
    <property type="protein sequence ID" value="F33H1.1b.1"/>
    <property type="gene ID" value="WBGene00000914"/>
</dbReference>
<dbReference type="EnsemblMetazoa" id="F33H1.1c.1">
    <molecule id="Q09555-3"/>
    <property type="protein sequence ID" value="F33H1.1c.1"/>
    <property type="gene ID" value="WBGene00000914"/>
</dbReference>
<dbReference type="EnsemblMetazoa" id="F33H1.1d.1">
    <molecule id="Q09555-4"/>
    <property type="protein sequence ID" value="F33H1.1d.1"/>
    <property type="gene ID" value="WBGene00000914"/>
</dbReference>
<dbReference type="EnsemblMetazoa" id="F33H1.1e.1">
    <molecule id="Q09555-5"/>
    <property type="protein sequence ID" value="F33H1.1e.1"/>
    <property type="gene ID" value="WBGene00000914"/>
</dbReference>
<dbReference type="GeneID" id="174577"/>
<dbReference type="KEGG" id="cel:CELE_F33H1.1"/>
<dbReference type="UCSC" id="F33H1.1b">
    <molecule id="Q09555-1"/>
    <property type="organism name" value="c. elegans"/>
</dbReference>
<dbReference type="AGR" id="WB:WBGene00000914"/>
<dbReference type="CTD" id="174577"/>
<dbReference type="WormBase" id="F33H1.1a">
    <molecule id="Q09555-2"/>
    <property type="protein sequence ID" value="CE17763"/>
    <property type="gene ID" value="WBGene00000914"/>
    <property type="gene designation" value="daf-19"/>
</dbReference>
<dbReference type="WormBase" id="F33H1.1b">
    <molecule id="Q09555-1"/>
    <property type="protein sequence ID" value="CE28019"/>
    <property type="gene ID" value="WBGene00000914"/>
    <property type="gene designation" value="daf-19"/>
</dbReference>
<dbReference type="WormBase" id="F33H1.1c">
    <molecule id="Q09555-3"/>
    <property type="protein sequence ID" value="CE01567"/>
    <property type="gene ID" value="WBGene00000914"/>
    <property type="gene designation" value="daf-19"/>
</dbReference>
<dbReference type="WormBase" id="F33H1.1d">
    <molecule id="Q09555-4"/>
    <property type="protein sequence ID" value="CE43609"/>
    <property type="gene ID" value="WBGene00000914"/>
    <property type="gene designation" value="daf-19"/>
</dbReference>
<dbReference type="WormBase" id="F33H1.1e">
    <molecule id="Q09555-5"/>
    <property type="protein sequence ID" value="CE02205"/>
    <property type="gene ID" value="WBGene00000914"/>
    <property type="gene designation" value="daf-19"/>
</dbReference>
<dbReference type="eggNOG" id="KOG3712">
    <property type="taxonomic scope" value="Eukaryota"/>
</dbReference>
<dbReference type="GeneTree" id="ENSGT01050000244879"/>
<dbReference type="HOGENOM" id="CLU_010393_2_0_1"/>
<dbReference type="InParanoid" id="Q09555"/>
<dbReference type="OMA" id="GTHCINE"/>
<dbReference type="OrthoDB" id="10056949at2759"/>
<dbReference type="PhylomeDB" id="Q09555"/>
<dbReference type="PRO" id="PR:Q09555"/>
<dbReference type="Proteomes" id="UP000001940">
    <property type="component" value="Chromosome II"/>
</dbReference>
<dbReference type="Bgee" id="WBGene00000914">
    <property type="expression patterns" value="Expressed in pharyngeal muscle cell (C elegans) and 4 other cell types or tissues"/>
</dbReference>
<dbReference type="ExpressionAtlas" id="Q09555">
    <property type="expression patterns" value="baseline and differential"/>
</dbReference>
<dbReference type="GO" id="GO:0005634">
    <property type="term" value="C:nucleus"/>
    <property type="evidence" value="ECO:0000314"/>
    <property type="project" value="UniProtKB"/>
</dbReference>
<dbReference type="GO" id="GO:0000981">
    <property type="term" value="F:DNA-binding transcription factor activity, RNA polymerase II-specific"/>
    <property type="evidence" value="ECO:0000318"/>
    <property type="project" value="GO_Central"/>
</dbReference>
<dbReference type="GO" id="GO:0000978">
    <property type="term" value="F:RNA polymerase II cis-regulatory region sequence-specific DNA binding"/>
    <property type="evidence" value="ECO:0000318"/>
    <property type="project" value="GO_Central"/>
</dbReference>
<dbReference type="GO" id="GO:0050829">
    <property type="term" value="P:defense response to Gram-negative bacterium"/>
    <property type="evidence" value="ECO:0000315"/>
    <property type="project" value="UniProtKB"/>
</dbReference>
<dbReference type="GO" id="GO:0060179">
    <property type="term" value="P:male mating behavior"/>
    <property type="evidence" value="ECO:0000315"/>
    <property type="project" value="UniProtKB"/>
</dbReference>
<dbReference type="GO" id="GO:0030182">
    <property type="term" value="P:neuron differentiation"/>
    <property type="evidence" value="ECO:0000315"/>
    <property type="project" value="UniProtKB"/>
</dbReference>
<dbReference type="GO" id="GO:0045944">
    <property type="term" value="P:positive regulation of transcription by RNA polymerase II"/>
    <property type="evidence" value="ECO:0000315"/>
    <property type="project" value="WormBase"/>
</dbReference>
<dbReference type="GO" id="GO:0010468">
    <property type="term" value="P:regulation of gene expression"/>
    <property type="evidence" value="ECO:0000315"/>
    <property type="project" value="UniProtKB"/>
</dbReference>
<dbReference type="GO" id="GO:0006357">
    <property type="term" value="P:regulation of transcription by RNA polymerase II"/>
    <property type="evidence" value="ECO:0000315"/>
    <property type="project" value="WormBase"/>
</dbReference>
<dbReference type="GO" id="GO:0042427">
    <property type="term" value="P:serotonin biosynthetic process"/>
    <property type="evidence" value="ECO:0000315"/>
    <property type="project" value="UniProtKB"/>
</dbReference>
<dbReference type="FunFam" id="1.10.10.10:FF:000017">
    <property type="entry name" value="transcription factor RFX3 isoform X1"/>
    <property type="match status" value="1"/>
</dbReference>
<dbReference type="Gene3D" id="1.10.10.10">
    <property type="entry name" value="Winged helix-like DNA-binding domain superfamily/Winged helix DNA-binding domain"/>
    <property type="match status" value="1"/>
</dbReference>
<dbReference type="InterPro" id="IPR003150">
    <property type="entry name" value="DNA-bd_RFX"/>
</dbReference>
<dbReference type="InterPro" id="IPR039779">
    <property type="entry name" value="RFX-like"/>
</dbReference>
<dbReference type="InterPro" id="IPR036388">
    <property type="entry name" value="WH-like_DNA-bd_sf"/>
</dbReference>
<dbReference type="InterPro" id="IPR036390">
    <property type="entry name" value="WH_DNA-bd_sf"/>
</dbReference>
<dbReference type="PANTHER" id="PTHR12619">
    <property type="entry name" value="RFX TRANSCRIPTION FACTOR FAMILY"/>
    <property type="match status" value="1"/>
</dbReference>
<dbReference type="PANTHER" id="PTHR12619:SF33">
    <property type="entry name" value="RFX, ISOFORM H"/>
    <property type="match status" value="1"/>
</dbReference>
<dbReference type="Pfam" id="PF25340">
    <property type="entry name" value="BCD_RFX"/>
    <property type="match status" value="1"/>
</dbReference>
<dbReference type="Pfam" id="PF02257">
    <property type="entry name" value="RFX_DNA_binding"/>
    <property type="match status" value="1"/>
</dbReference>
<dbReference type="SUPFAM" id="SSF46785">
    <property type="entry name" value="Winged helix' DNA-binding domain"/>
    <property type="match status" value="1"/>
</dbReference>
<dbReference type="PROSITE" id="PS51526">
    <property type="entry name" value="RFX_DBD"/>
    <property type="match status" value="1"/>
</dbReference>
<evidence type="ECO:0000255" key="1">
    <source>
        <dbReference type="PROSITE-ProRule" id="PRU00858"/>
    </source>
</evidence>
<evidence type="ECO:0000256" key="2">
    <source>
        <dbReference type="SAM" id="MobiDB-lite"/>
    </source>
</evidence>
<evidence type="ECO:0000269" key="3">
    <source>
    </source>
</evidence>
<evidence type="ECO:0000269" key="4">
    <source>
    </source>
</evidence>
<evidence type="ECO:0000269" key="5">
    <source>
    </source>
</evidence>
<evidence type="ECO:0000269" key="6">
    <source>
    </source>
</evidence>
<evidence type="ECO:0000303" key="7">
    <source>
    </source>
</evidence>
<evidence type="ECO:0000303" key="8">
    <source>
    </source>
</evidence>
<evidence type="ECO:0000305" key="9"/>
<evidence type="ECO:0000312" key="10">
    <source>
        <dbReference type="EMBL" id="ACF17932.1"/>
    </source>
</evidence>
<evidence type="ECO:0000312" key="11">
    <source>
        <dbReference type="WormBase" id="F33H1.1b"/>
    </source>
</evidence>
<evidence type="ECO:0000312" key="12">
    <source>
        <dbReference type="WormBase" id="F33H1.1c"/>
    </source>
</evidence>
<evidence type="ECO:0000312" key="13">
    <source>
        <dbReference type="WormBase" id="F33H1.1d"/>
    </source>
</evidence>
<evidence type="ECO:0000312" key="14">
    <source>
        <dbReference type="WormBase" id="F33H1.1e"/>
    </source>
</evidence>
<organism>
    <name type="scientific">Caenorhabditis elegans</name>
    <dbReference type="NCBI Taxonomy" id="6239"/>
    <lineage>
        <taxon>Eukaryota</taxon>
        <taxon>Metazoa</taxon>
        <taxon>Ecdysozoa</taxon>
        <taxon>Nematoda</taxon>
        <taxon>Chromadorea</taxon>
        <taxon>Rhabditida</taxon>
        <taxon>Rhabditina</taxon>
        <taxon>Rhabditomorpha</taxon>
        <taxon>Rhabditoidea</taxon>
        <taxon>Rhabditidae</taxon>
        <taxon>Peloderinae</taxon>
        <taxon>Caenorhabditis</taxon>
    </lineage>
</organism>
<reference key="1">
    <citation type="journal article" date="2000" name="Mol. Cell">
        <title>The RFX-type transcription factor DAF-19 regulates sensory neuron cilium formation in C. elegans.</title>
        <authorList>
            <person name="Swoboda P."/>
            <person name="Adler H.T."/>
            <person name="Thomas J.H."/>
        </authorList>
    </citation>
    <scope>NUCLEOTIDE SEQUENCE [MRNA] (ISOFORMS A AND B)</scope>
</reference>
<reference evidence="10" key="2">
    <citation type="journal article" date="2010" name="Genetics">
        <title>Functional specialization of sensory cilia by an RFX transcription factor isoform.</title>
        <authorList>
            <person name="Wang J."/>
            <person name="Schwartz H.T."/>
            <person name="Barr M.M."/>
        </authorList>
    </citation>
    <scope>NUCLEOTIDE SEQUENCE [MRNA] (ISOFORM C)</scope>
    <scope>FUNCTION (ISOFORM C)</scope>
    <scope>SUBCELLULAR LOCATION (ISOFORM C)</scope>
    <scope>TISSUE SPECIFICITY (ISOFORM C)</scope>
    <scope>MUTAGENESIS OF 255-ARG--LEU-805</scope>
</reference>
<reference key="3">
    <citation type="journal article" date="1998" name="Science">
        <title>Genome sequence of the nematode C. elegans: a platform for investigating biology.</title>
        <authorList>
            <consortium name="The C. elegans sequencing consortium"/>
        </authorList>
    </citation>
    <scope>NUCLEOTIDE SEQUENCE [LARGE SCALE GENOMIC DNA]</scope>
    <source>
        <strain>Bristol N2</strain>
    </source>
</reference>
<reference key="4">
    <citation type="journal article" date="2003" name="Development">
        <title>Distinct roles of transcription factors EGL-46 and DAF-19 in specifying the functionality of a polycystin-expressing sensory neuron necessary for C. elegans male vulva location behavior.</title>
        <authorList>
            <person name="Yu H."/>
            <person name="Pretot R.F."/>
            <person name="Burglin T.R."/>
            <person name="Sternberg P.W."/>
        </authorList>
    </citation>
    <scope>FUNCTION</scope>
    <scope>SUBCELLULAR LOCATION</scope>
    <scope>DEVELOPMENTAL STAGE</scope>
    <scope>MUTAGENESIS OF 255-ARG--LEU-805</scope>
</reference>
<reference key="5">
    <citation type="journal article" date="2013" name="PLoS Genet.">
        <title>RFX transcription factor DAF-19 regulates 5-HT and innate immune responses to pathogenic bacteria in Caenorhabditis elegans.</title>
        <authorList>
            <person name="Xie Y."/>
            <person name="Moussaif M."/>
            <person name="Choi S."/>
            <person name="Xu L."/>
            <person name="Sze J.Y."/>
        </authorList>
    </citation>
    <scope>FUNCTION</scope>
</reference>
<feature type="chain" id="PRO_0000215294" description="RFX-like transcription factor daf-19">
    <location>
        <begin position="1"/>
        <end position="805"/>
    </location>
</feature>
<feature type="DNA-binding region" description="RFX-type winged-helix" evidence="1">
    <location>
        <begin position="260"/>
        <end position="334"/>
    </location>
</feature>
<feature type="region of interest" description="Disordered" evidence="2">
    <location>
        <begin position="1"/>
        <end position="113"/>
    </location>
</feature>
<feature type="compositionally biased region" description="Polar residues" evidence="2">
    <location>
        <begin position="1"/>
        <end position="14"/>
    </location>
</feature>
<feature type="compositionally biased region" description="Basic and acidic residues" evidence="2">
    <location>
        <begin position="19"/>
        <end position="92"/>
    </location>
</feature>
<feature type="compositionally biased region" description="Polar residues" evidence="2">
    <location>
        <begin position="93"/>
        <end position="104"/>
    </location>
</feature>
<feature type="splice variant" id="VSP_061389" description="In isoform c." evidence="9">
    <original>MTNEEPVPSTSSVLSAAEKNVKIETPSRKRKGLDIDALWRKKFKDVENQKSPEKSEKSEKTIKEEPLETHPSGERKLRSASKDSKSLSKETHNTISTRSSSSGTPRKKMEPEDVKPNIKMLKKSLPVSFQCSNLNDGTVGDASVMLDPTKISLHSSSVAYGEESQDEMEVIQHSTDDPNGTREEFDYNQIEYGN</original>
    <variation>MYLPQCNTMYS</variation>
    <location>
        <begin position="1"/>
        <end position="194"/>
    </location>
</feature>
<feature type="splice variant" id="VSP_061390" description="In isoform e." evidence="9">
    <location>
        <begin position="1"/>
        <end position="167"/>
    </location>
</feature>
<feature type="splice variant" id="VSP_061391" description="In isoform d." evidence="9">
    <location>
        <begin position="1"/>
        <end position="144"/>
    </location>
</feature>
<feature type="splice variant" id="VSP_005661" description="In isoform a." evidence="7">
    <location>
        <begin position="142"/>
        <end position="166"/>
    </location>
</feature>
<feature type="mutagenesis site" description="In m86; abolishes expression of ceh-26 and nlp-8 in the male-specific hook neuron HOB. Substantially reduces non-sex-specific expression of ceh-26 in some head neurons. Reduces male-specific expression of pkd-2 in the four ciliated CEM neurons in the head, and the HOB and B-type ray neurons in the tail. Causes constitutive formation of dauer larvae." evidence="4 5">
    <location>
        <begin position="255"/>
        <end position="805"/>
    </location>
</feature>
<comment type="function">
    <text evidence="3 4 6">Probable transcription factor (PubMed:10882127, PubMed:12954713). May regulate some genes of ciliated sensory neurons (PubMed:10882127, PubMed:12954713). May activate the expression of the shared components of sensory cilia, but not the cell-type-specific expression (PubMed:10882127, PubMed:12954713). Together with transcription factor atf-7, involved in regulation of the serotonergic response of ADF neurons to pathogenic food (PubMed:23505381).</text>
</comment>
<comment type="function">
    <molecule>Isoform c</molecule>
    <text evidence="5">Involved in male mating behavior; may play a role in functional specialization of PKD ciliated sensory neurons.</text>
</comment>
<comment type="subcellular location">
    <subcellularLocation>
        <location evidence="1 4">Nucleus</location>
    </subcellularLocation>
</comment>
<comment type="subcellular location">
    <molecule>Isoform c</molecule>
    <subcellularLocation>
        <location evidence="5">Nucleus</location>
    </subcellularLocation>
</comment>
<comment type="alternative products">
    <event type="alternative splicing"/>
    <isoform>
        <id>Q09555-1</id>
        <name>b</name>
        <sequence type="displayed"/>
    </isoform>
    <isoform>
        <id>Q09555-2</id>
        <name>a</name>
        <sequence type="described" ref="VSP_005661"/>
    </isoform>
    <isoform>
        <id>Q09555-3</id>
        <name evidence="12">c</name>
        <name evidence="8">daf-19m</name>
        <sequence type="described" ref="VSP_061389"/>
    </isoform>
    <isoform>
        <id>Q09555-4</id>
        <name evidence="13">d</name>
        <name evidence="8">daf-19c</name>
        <sequence type="described" ref="VSP_061391"/>
    </isoform>
    <isoform>
        <id>Q09555-5</id>
        <name evidence="14">e</name>
        <sequence type="described" ref="VSP_061390"/>
    </isoform>
</comment>
<comment type="tissue specificity">
    <text>Ciliated sensory neurons.</text>
</comment>
<comment type="tissue specificity">
    <molecule>Isoform c</molecule>
    <text evidence="5">Expressed in the male tail HOB and RnB neurons but not in male-specific CEM head neurons or other ciliated neurons.</text>
</comment>
<comment type="developmental stage">
    <text evidence="4">Expressed in the male-specific ciliated sensory neurons, including the two hook neurons, and the 36 ray neurons at the L4 larval stage.</text>
</comment>
<comment type="similarity">
    <text evidence="1">Belongs to the RFX family.</text>
</comment>
<gene>
    <name evidence="11" type="primary">daf-19</name>
    <name evidence="11" type="ORF">F33H1.1</name>
</gene>
<proteinExistence type="evidence at protein level"/>
<sequence length="805" mass="90908">MTNEEPVPSTSSVLSAAEKNVKIETPSRKRKGLDIDALWRKKFKDVENQKSPEKSEKSEKTIKEEPLETHPSGERKLRSASKDSKSLSKETHNTISTRSSSSGTPRKKMEPEDVKPNIKMLKKSLPVSFQCSNLNDGTVGDASVMLDPTKISLHSSSVAYGEESQDEMEVIQHSTDDPNGTREEFDYNQIEYGNAVTPNGTYTLYAPDSNYAPYYQYSNNMQSSPQDNAPYLVPAPQSPVSIDDADSINLPNNQRASPATVNWLFENYEIGEGSLPRCELYDHYKKHCAEHRMDPVNAASFGKLIRSVFHNLKTRRLGTRGNSKYHYYGIRLKDSSTLHSMQHPQPQIIQNTYTPPMQLPQRDAYADTVNQVAAIKYMDVEIPDKRARKDNSSSSSSCRDSVSPCMDLPAQQTIQHTPVHSVIPSTQQPAPLHNNNVVSYVVTESDKAAMGKIDLPIVPFPDKDALMATIGFRKLGVGEEELNSLIDIYEILCREILALIKNIDFASVEDTWSKFWSGNFGVDRDHISALCTLDQVQDYIIEVDLALYQTIVDTLIPNVLLSELSTGMTQTCRTFAKNIDVYLRKSLMLANLGEFFVKKKIQAIKYLQQGLKRYTSLNHLAHASRGVLMKPEQVQQMYQDYIRVDINTVHQQAGWICGCDSVMVHHVNNAFKHNLQRMSAMEVWAEWLESIVDQVLAKYHDKPANVIANVGKQFLLNWSFYTSMIIRDLTLRSAMSFGSFTLIRLLADDYMYYLIESKIAKAGKQQLITVIRADKDWPLTTNPQEYIVVANDNDEDLDLEKAGLL</sequence>